<accession>A3DC29</accession>
<accession>P04955</accession>
<sequence>MKNVKKRVGVVLLILAVLGVYMLAMPANTVSAAGVPFNTKYPYGPTSIADNQSEVTAMLKAEWEDWKSKRITSNGAGGYKRVQRDASTNYDTVSEGMGYGLLLAVCFNEQALFDDLYRYVKSHFNGNGLMHWHIDANNNVTSHDGGDGAATDADEDIALALIFADKLWGSSGAINYGQEARTLINNLYNHCVEHGSYVLKPGDRWGGSSVTNPSYFAPAWYKVYAQYTGDTRWNQVADKCYQIVEEVKKYNNGTGLVPDWCTASGTPASGQSYDYKYDATRYGWRTAVDYSWFGDQRAKANCDMLTKFFARDGAKGIVDGYTIQGSKISNNHNASFIGPVAAASMTGYDLNFAKELYRETVAVKDSEYYGYYGNSLRLLTLLYITGNFPNPLSDLSGQPTPPSNPTPSLPPQVVYGDVNGDGNVNSTDLTMLKRYLLKSVTNINREAADVNRDGAINSSDMTILKRYLIKSIPHLPY</sequence>
<gene>
    <name type="primary">celA</name>
    <name type="ordered locus">Cthe_0269</name>
</gene>
<feature type="signal peptide" evidence="1">
    <location>
        <begin position="1"/>
        <end position="32"/>
    </location>
</feature>
<feature type="chain" id="PRO_0000284721" description="Endoglucanase A">
    <location>
        <begin position="33"/>
        <end position="477"/>
    </location>
</feature>
<feature type="domain" description="Dockerin" evidence="2">
    <location>
        <begin position="411"/>
        <end position="477"/>
    </location>
</feature>
<feature type="active site" description="Proton donor">
    <location>
        <position position="95"/>
    </location>
</feature>
<feature type="active site" description="Nucleophile" evidence="3">
    <location>
        <position position="152"/>
    </location>
</feature>
<feature type="strand" evidence="4">
    <location>
        <begin position="42"/>
        <end position="44"/>
    </location>
</feature>
<feature type="strand" evidence="4">
    <location>
        <begin position="48"/>
        <end position="50"/>
    </location>
</feature>
<feature type="helix" evidence="4">
    <location>
        <begin position="52"/>
        <end position="70"/>
    </location>
</feature>
<feature type="helix" evidence="4">
    <location>
        <begin position="86"/>
        <end position="88"/>
    </location>
</feature>
<feature type="helix" evidence="4">
    <location>
        <begin position="94"/>
        <end position="106"/>
    </location>
</feature>
<feature type="helix" evidence="4">
    <location>
        <begin position="110"/>
        <end position="121"/>
    </location>
</feature>
<feature type="strand" evidence="4">
    <location>
        <begin position="128"/>
        <end position="130"/>
    </location>
</feature>
<feature type="strand" evidence="4">
    <location>
        <begin position="132"/>
        <end position="134"/>
    </location>
</feature>
<feature type="turn" evidence="4">
    <location>
        <begin position="142"/>
        <end position="147"/>
    </location>
</feature>
<feature type="helix" evidence="4">
    <location>
        <begin position="151"/>
        <end position="168"/>
    </location>
</feature>
<feature type="strand" evidence="4">
    <location>
        <begin position="170"/>
        <end position="174"/>
    </location>
</feature>
<feature type="helix" evidence="4">
    <location>
        <begin position="176"/>
        <end position="191"/>
    </location>
</feature>
<feature type="turn" evidence="4">
    <location>
        <begin position="194"/>
        <end position="196"/>
    </location>
</feature>
<feature type="strand" evidence="4">
    <location>
        <begin position="201"/>
        <end position="205"/>
    </location>
</feature>
<feature type="helix" evidence="4">
    <location>
        <begin position="213"/>
        <end position="215"/>
    </location>
</feature>
<feature type="helix" evidence="4">
    <location>
        <begin position="218"/>
        <end position="228"/>
    </location>
</feature>
<feature type="helix" evidence="4">
    <location>
        <begin position="232"/>
        <end position="247"/>
    </location>
</feature>
<feature type="turn" evidence="4">
    <location>
        <begin position="248"/>
        <end position="250"/>
    </location>
</feature>
<feature type="strand" evidence="4">
    <location>
        <begin position="259"/>
        <end position="261"/>
    </location>
</feature>
<feature type="strand" evidence="4">
    <location>
        <begin position="274"/>
        <end position="276"/>
    </location>
</feature>
<feature type="helix" evidence="4">
    <location>
        <begin position="279"/>
        <end position="281"/>
    </location>
</feature>
<feature type="helix" evidence="4">
    <location>
        <begin position="282"/>
        <end position="293"/>
    </location>
</feature>
<feature type="helix" evidence="4">
    <location>
        <begin position="296"/>
        <end position="310"/>
    </location>
</feature>
<feature type="helix" evidence="4">
    <location>
        <begin position="314"/>
        <end position="316"/>
    </location>
</feature>
<feature type="turn" evidence="4">
    <location>
        <begin position="334"/>
        <end position="336"/>
    </location>
</feature>
<feature type="helix" evidence="4">
    <location>
        <begin position="337"/>
        <end position="344"/>
    </location>
</feature>
<feature type="helix" evidence="4">
    <location>
        <begin position="350"/>
        <end position="362"/>
    </location>
</feature>
<feature type="helix" evidence="4">
    <location>
        <begin position="367"/>
        <end position="369"/>
    </location>
</feature>
<feature type="helix" evidence="4">
    <location>
        <begin position="372"/>
        <end position="384"/>
    </location>
</feature>
<proteinExistence type="evidence at protein level"/>
<organism>
    <name type="scientific">Acetivibrio thermocellus (strain ATCC 27405 / DSM 1237 / JCM 9322 / NBRC 103400 / NCIMB 10682 / NRRL B-4536 / VPI 7372)</name>
    <name type="common">Clostridium thermocellum</name>
    <dbReference type="NCBI Taxonomy" id="203119"/>
    <lineage>
        <taxon>Bacteria</taxon>
        <taxon>Bacillati</taxon>
        <taxon>Bacillota</taxon>
        <taxon>Clostridia</taxon>
        <taxon>Eubacteriales</taxon>
        <taxon>Oscillospiraceae</taxon>
        <taxon>Acetivibrio</taxon>
    </lineage>
</organism>
<keyword id="KW-0002">3D-structure</keyword>
<keyword id="KW-0119">Carbohydrate metabolism</keyword>
<keyword id="KW-0136">Cellulose degradation</keyword>
<keyword id="KW-0326">Glycosidase</keyword>
<keyword id="KW-0378">Hydrolase</keyword>
<keyword id="KW-0624">Polysaccharide degradation</keyword>
<keyword id="KW-1185">Reference proteome</keyword>
<keyword id="KW-0732">Signal</keyword>
<evidence type="ECO:0000250" key="1"/>
<evidence type="ECO:0000255" key="2">
    <source>
        <dbReference type="PROSITE-ProRule" id="PRU01102"/>
    </source>
</evidence>
<evidence type="ECO:0000305" key="3"/>
<evidence type="ECO:0007829" key="4">
    <source>
        <dbReference type="PDB" id="1KWF"/>
    </source>
</evidence>
<dbReference type="EC" id="3.2.1.4"/>
<dbReference type="EMBL" id="K03088">
    <property type="protein sequence ID" value="AAA83521.1"/>
    <property type="molecule type" value="Genomic_DNA"/>
</dbReference>
<dbReference type="EMBL" id="CP000568">
    <property type="protein sequence ID" value="ABN51508.1"/>
    <property type="molecule type" value="Genomic_DNA"/>
</dbReference>
<dbReference type="PIR" id="A23100">
    <property type="entry name" value="CZCLAM"/>
</dbReference>
<dbReference type="RefSeq" id="WP_003512420.1">
    <property type="nucleotide sequence ID" value="NC_009012.1"/>
</dbReference>
<dbReference type="PDB" id="1CEM">
    <property type="method" value="X-ray"/>
    <property type="resolution" value="1.65 A"/>
    <property type="chains" value="A=33-395"/>
</dbReference>
<dbReference type="PDB" id="1IS9">
    <property type="method" value="X-ray"/>
    <property type="resolution" value="1.03 A"/>
    <property type="chains" value="A=33-395"/>
</dbReference>
<dbReference type="PDB" id="1KWF">
    <property type="method" value="X-ray"/>
    <property type="resolution" value="0.94 A"/>
    <property type="chains" value="A=33-395"/>
</dbReference>
<dbReference type="PDBsum" id="1CEM"/>
<dbReference type="PDBsum" id="1IS9"/>
<dbReference type="PDBsum" id="1KWF"/>
<dbReference type="SMR" id="A3DC29"/>
<dbReference type="STRING" id="203119.Cthe_0269"/>
<dbReference type="CAZy" id="GH8">
    <property type="family name" value="Glycoside Hydrolase Family 8"/>
</dbReference>
<dbReference type="GeneID" id="35806170"/>
<dbReference type="KEGG" id="cth:Cthe_0269"/>
<dbReference type="eggNOG" id="COG3405">
    <property type="taxonomic scope" value="Bacteria"/>
</dbReference>
<dbReference type="HOGENOM" id="CLU_036185_0_0_9"/>
<dbReference type="OrthoDB" id="9803461at2"/>
<dbReference type="BioCyc" id="MetaCyc:MONOMER-16413"/>
<dbReference type="BRENDA" id="3.2.1.4">
    <property type="organism ID" value="1530"/>
</dbReference>
<dbReference type="EvolutionaryTrace" id="A3DC29"/>
<dbReference type="Proteomes" id="UP000002145">
    <property type="component" value="Chromosome"/>
</dbReference>
<dbReference type="GO" id="GO:0008810">
    <property type="term" value="F:cellulase activity"/>
    <property type="evidence" value="ECO:0007669"/>
    <property type="project" value="UniProtKB-EC"/>
</dbReference>
<dbReference type="GO" id="GO:0030245">
    <property type="term" value="P:cellulose catabolic process"/>
    <property type="evidence" value="ECO:0007669"/>
    <property type="project" value="UniProtKB-KW"/>
</dbReference>
<dbReference type="CDD" id="cd14256">
    <property type="entry name" value="Dockerin_I"/>
    <property type="match status" value="1"/>
</dbReference>
<dbReference type="FunFam" id="1.10.1330.10:FF:000001">
    <property type="entry name" value="Endoglucanase D"/>
    <property type="match status" value="1"/>
</dbReference>
<dbReference type="Gene3D" id="1.50.10.10">
    <property type="match status" value="1"/>
</dbReference>
<dbReference type="Gene3D" id="1.10.1330.10">
    <property type="entry name" value="Dockerin domain"/>
    <property type="match status" value="1"/>
</dbReference>
<dbReference type="InterPro" id="IPR008928">
    <property type="entry name" value="6-hairpin_glycosidase_sf"/>
</dbReference>
<dbReference type="InterPro" id="IPR012341">
    <property type="entry name" value="6hp_glycosidase-like_sf"/>
</dbReference>
<dbReference type="InterPro" id="IPR002105">
    <property type="entry name" value="Dockerin_1_rpt"/>
</dbReference>
<dbReference type="InterPro" id="IPR016134">
    <property type="entry name" value="Dockerin_dom"/>
</dbReference>
<dbReference type="InterPro" id="IPR036439">
    <property type="entry name" value="Dockerin_dom_sf"/>
</dbReference>
<dbReference type="InterPro" id="IPR018247">
    <property type="entry name" value="EF_Hand_1_Ca_BS"/>
</dbReference>
<dbReference type="InterPro" id="IPR002037">
    <property type="entry name" value="Glyco_hydro_8"/>
</dbReference>
<dbReference type="InterPro" id="IPR019834">
    <property type="entry name" value="Glyco_hydro_8_CS"/>
</dbReference>
<dbReference type="Pfam" id="PF00404">
    <property type="entry name" value="Dockerin_1"/>
    <property type="match status" value="1"/>
</dbReference>
<dbReference type="Pfam" id="PF01270">
    <property type="entry name" value="Glyco_hydro_8"/>
    <property type="match status" value="1"/>
</dbReference>
<dbReference type="PRINTS" id="PR00735">
    <property type="entry name" value="GLHYDRLASE8"/>
</dbReference>
<dbReference type="SUPFAM" id="SSF48208">
    <property type="entry name" value="Six-hairpin glycosidases"/>
    <property type="match status" value="1"/>
</dbReference>
<dbReference type="SUPFAM" id="SSF63446">
    <property type="entry name" value="Type I dockerin domain"/>
    <property type="match status" value="1"/>
</dbReference>
<dbReference type="PROSITE" id="PS00448">
    <property type="entry name" value="CLOS_CELLULOSOME_RPT"/>
    <property type="match status" value="2"/>
</dbReference>
<dbReference type="PROSITE" id="PS51766">
    <property type="entry name" value="DOCKERIN"/>
    <property type="match status" value="1"/>
</dbReference>
<dbReference type="PROSITE" id="PS00018">
    <property type="entry name" value="EF_HAND_1"/>
    <property type="match status" value="2"/>
</dbReference>
<dbReference type="PROSITE" id="PS00812">
    <property type="entry name" value="GLYCOSYL_HYDROL_F8"/>
    <property type="match status" value="1"/>
</dbReference>
<protein>
    <recommendedName>
        <fullName>Endoglucanase A</fullName>
        <shortName>EGA</shortName>
        <ecNumber>3.2.1.4</ecNumber>
    </recommendedName>
    <alternativeName>
        <fullName>Cellulase A</fullName>
    </alternativeName>
    <alternativeName>
        <fullName>Endo-1,4-beta-glucanase</fullName>
    </alternativeName>
</protein>
<reference key="1">
    <citation type="journal article" date="1985" name="J. Bacteriol.">
        <title>Sequence of a cellulase gene of the thermophilic bacterium Clostridium thermocellum.</title>
        <authorList>
            <person name="Beguin P."/>
            <person name="Cornet P."/>
            <person name="Aubert J.-P."/>
        </authorList>
    </citation>
    <scope>NUCLEOTIDE SEQUENCE [GENOMIC DNA]</scope>
</reference>
<reference key="2">
    <citation type="submission" date="2007-02" db="EMBL/GenBank/DDBJ databases">
        <title>Complete sequence of Clostridium thermocellum ATCC 27405.</title>
        <authorList>
            <consortium name="US DOE Joint Genome Institute"/>
            <person name="Copeland A."/>
            <person name="Lucas S."/>
            <person name="Lapidus A."/>
            <person name="Barry K."/>
            <person name="Detter J.C."/>
            <person name="Glavina del Rio T."/>
            <person name="Hammon N."/>
            <person name="Israni S."/>
            <person name="Dalin E."/>
            <person name="Tice H."/>
            <person name="Pitluck S."/>
            <person name="Chertkov O."/>
            <person name="Brettin T."/>
            <person name="Bruce D."/>
            <person name="Han C."/>
            <person name="Tapia R."/>
            <person name="Gilna P."/>
            <person name="Schmutz J."/>
            <person name="Larimer F."/>
            <person name="Land M."/>
            <person name="Hauser L."/>
            <person name="Kyrpides N."/>
            <person name="Mikhailova N."/>
            <person name="Wu J.H.D."/>
            <person name="Newcomb M."/>
            <person name="Richardson P."/>
        </authorList>
    </citation>
    <scope>NUCLEOTIDE SEQUENCE [LARGE SCALE GENOMIC DNA]</scope>
    <source>
        <strain>ATCC 27405 / DSM 1237 / JCM 9322 / NBRC 103400 / NCIMB 10682 / NRRL B-4536 / VPI 7372</strain>
    </source>
</reference>
<reference key="3">
    <citation type="journal article" date="1996" name="Structure">
        <title>The crystal structure of endoglucanase CelA, a family 8 glycosyl hydrolase from Clostridium thermocellum.</title>
        <authorList>
            <person name="Alzari P.M."/>
            <person name="Souchon H."/>
            <person name="Dominguez R."/>
        </authorList>
    </citation>
    <scope>X-RAY CRYSTALLOGRAPHY (1.65 ANGSTROMS) OF 33-395</scope>
</reference>
<reference key="4">
    <citation type="journal article" date="2002" name="Acta Crystallogr. D">
        <title>Advantages of high-resolution phasing: MAD to atomic resolution.</title>
        <authorList>
            <person name="Schmidt A."/>
            <person name="Gonzalez A."/>
            <person name="Morris R.J."/>
            <person name="Costabel M."/>
            <person name="Alzari P.M."/>
            <person name="Lamzin V.S."/>
        </authorList>
    </citation>
    <scope>X-RAY CRYSTALLOGRAPHY (1.03 ANGSTROMS) OF 33-395</scope>
</reference>
<reference key="5">
    <citation type="journal article" date="2002" name="J. Mol. Biol.">
        <title>Atomic (0.94 A) resolution structure of an inverting glycosidase in complex with substrate.</title>
        <authorList>
            <person name="Guerin D.M."/>
            <person name="Lascombe M.B."/>
            <person name="Costabel M."/>
            <person name="Souchon H."/>
            <person name="Lamzin V."/>
            <person name="Beguin P."/>
            <person name="Alzari P.M."/>
        </authorList>
    </citation>
    <scope>X-RAY CRYSTALLOGRAPHY (0.94 ANGSTROMS) OF 33-395</scope>
</reference>
<comment type="function">
    <text>This enzyme catalyzes the endohydrolysis of 1,4-beta-glucosidic linkages in cellulose, lichenin and cereal beta-D-glucans.</text>
</comment>
<comment type="catalytic activity">
    <reaction>
        <text>Endohydrolysis of (1-&gt;4)-beta-D-glucosidic linkages in cellulose, lichenin and cereal beta-D-glucans.</text>
        <dbReference type="EC" id="3.2.1.4"/>
    </reaction>
</comment>
<comment type="similarity">
    <text evidence="3">Belongs to the glycosyl hydrolase 8 (cellulase D) family.</text>
</comment>
<name>GUNA_ACET2</name>